<organism>
    <name type="scientific">Homo sapiens</name>
    <name type="common">Human</name>
    <dbReference type="NCBI Taxonomy" id="9606"/>
    <lineage>
        <taxon>Eukaryota</taxon>
        <taxon>Metazoa</taxon>
        <taxon>Chordata</taxon>
        <taxon>Craniata</taxon>
        <taxon>Vertebrata</taxon>
        <taxon>Euteleostomi</taxon>
        <taxon>Mammalia</taxon>
        <taxon>Eutheria</taxon>
        <taxon>Euarchontoglires</taxon>
        <taxon>Primates</taxon>
        <taxon>Haplorrhini</taxon>
        <taxon>Catarrhini</taxon>
        <taxon>Hominidae</taxon>
        <taxon>Homo</taxon>
    </lineage>
</organism>
<evidence type="ECO:0000305" key="1"/>
<comment type="similarity">
    <text evidence="1">Belongs to the RRN3 family.</text>
</comment>
<comment type="caution">
    <text evidence="1">Could be the product of a pseudogene.</text>
</comment>
<dbReference type="EMBL" id="AC009093">
    <property type="status" value="NOT_ANNOTATED_CDS"/>
    <property type="molecule type" value="Genomic_DNA"/>
</dbReference>
<dbReference type="EMBL" id="BC042920">
    <property type="status" value="NOT_ANNOTATED_CDS"/>
    <property type="molecule type" value="mRNA"/>
</dbReference>
<dbReference type="SMR" id="A6NIE6"/>
<dbReference type="FunCoup" id="A6NIE6">
    <property type="interactions" value="567"/>
</dbReference>
<dbReference type="IntAct" id="A6NIE6">
    <property type="interactions" value="1"/>
</dbReference>
<dbReference type="iPTMnet" id="A6NIE6"/>
<dbReference type="PhosphoSitePlus" id="A6NIE6"/>
<dbReference type="BioMuta" id="HGNC:37619"/>
<dbReference type="jPOST" id="A6NIE6"/>
<dbReference type="MassIVE" id="A6NIE6"/>
<dbReference type="PeptideAtlas" id="A6NIE6"/>
<dbReference type="Pumba" id="A6NIE6"/>
<dbReference type="AGR" id="HGNC:37619"/>
<dbReference type="GeneCards" id="RRN3P2"/>
<dbReference type="HGNC" id="HGNC:37619">
    <property type="gene designation" value="RRN3P2"/>
</dbReference>
<dbReference type="neXtProt" id="NX_A6NIE6"/>
<dbReference type="InParanoid" id="A6NIE6"/>
<dbReference type="PAN-GO" id="A6NIE6">
    <property type="GO annotations" value="4 GO annotations based on evolutionary models"/>
</dbReference>
<dbReference type="PhylomeDB" id="A6NIE6"/>
<dbReference type="PathwayCommons" id="A6NIE6"/>
<dbReference type="SignaLink" id="A6NIE6"/>
<dbReference type="Pharos" id="A6NIE6">
    <property type="development level" value="Tdark"/>
</dbReference>
<dbReference type="Proteomes" id="UP000005640">
    <property type="component" value="Unplaced"/>
</dbReference>
<dbReference type="RNAct" id="A6NIE6">
    <property type="molecule type" value="protein"/>
</dbReference>
<dbReference type="GO" id="GO:0005634">
    <property type="term" value="C:nucleus"/>
    <property type="evidence" value="ECO:0000318"/>
    <property type="project" value="GO_Central"/>
</dbReference>
<dbReference type="GO" id="GO:0001042">
    <property type="term" value="F:RNA polymerase I core binding"/>
    <property type="evidence" value="ECO:0000318"/>
    <property type="project" value="GO_Central"/>
</dbReference>
<dbReference type="GO" id="GO:0001181">
    <property type="term" value="F:RNA polymerase I general transcription initiation factor activity"/>
    <property type="evidence" value="ECO:0000318"/>
    <property type="project" value="GO_Central"/>
</dbReference>
<dbReference type="GO" id="GO:0006361">
    <property type="term" value="P:transcription initiation at RNA polymerase I promoter"/>
    <property type="evidence" value="ECO:0000318"/>
    <property type="project" value="GO_Central"/>
</dbReference>
<dbReference type="InterPro" id="IPR007991">
    <property type="entry name" value="RNA_pol_I_trans_ini_fac_RRN3"/>
</dbReference>
<dbReference type="PANTHER" id="PTHR12790:SF0">
    <property type="entry name" value="RNA POLYMERASE I-SPECIFIC TRANSCRIPTION INITIATION FACTOR RRN3-RELATED"/>
    <property type="match status" value="1"/>
</dbReference>
<dbReference type="PANTHER" id="PTHR12790">
    <property type="entry name" value="TRANSCRIPTION INITIATION FACTOR IA RRN3"/>
    <property type="match status" value="1"/>
</dbReference>
<dbReference type="Pfam" id="PF05327">
    <property type="entry name" value="RRN3"/>
    <property type="match status" value="3"/>
</dbReference>
<gene>
    <name type="primary">RRN3P2</name>
</gene>
<keyword id="KW-1267">Proteomics identification</keyword>
<keyword id="KW-1185">Reference proteome</keyword>
<accession>A6NIE6</accession>
<protein>
    <recommendedName>
        <fullName>Putative RRN3-like protein RRN3P2</fullName>
    </recommendedName>
    <alternativeName>
        <fullName>RNA polymerase I transcription factor homolog pseudogene 2</fullName>
    </alternativeName>
</protein>
<feature type="chain" id="PRO_0000332198" description="Putative RRN3-like protein RRN3P2">
    <location>
        <begin position="1"/>
        <end position="340"/>
    </location>
</feature>
<name>RN3P2_HUMAN</name>
<sequence length="340" mass="38035">MAAPLLHTRLPGDAAASPSAVKMLGASRTGISNMRALENDFFNSPPRKTVQFGGTVTEVLLKYKTGETNDFELLKNQLLDPDIKDDQIINWLLEFRSSIMYLTKDFEQLISIILRLPWLNRSQTVVEEYLAFLGNLVSAQTVFLRPCLSMIASHFVPPRVIIKEGDVDVSDSDDEDDNLPANFDTSQSLANNSKICTIECYVHNLLRISVYFPTLRHEILELIIEKLLKLDVNASRQGIEDAEETANQTCGGTDSTEGLCNMGFAEAFLEPLWKKLQDPSNPAIIRQAAGNYIGSFLARAKFIPLMIREQRHSAMLLSMDHFTQPAKLCSTPLFLDTSSF</sequence>
<proteinExistence type="uncertain"/>
<reference key="1">
    <citation type="journal article" date="2004" name="Nature">
        <title>The sequence and analysis of duplication-rich human chromosome 16.</title>
        <authorList>
            <person name="Martin J."/>
            <person name="Han C."/>
            <person name="Gordon L.A."/>
            <person name="Terry A."/>
            <person name="Prabhakar S."/>
            <person name="She X."/>
            <person name="Xie G."/>
            <person name="Hellsten U."/>
            <person name="Chan Y.M."/>
            <person name="Altherr M."/>
            <person name="Couronne O."/>
            <person name="Aerts A."/>
            <person name="Bajorek E."/>
            <person name="Black S."/>
            <person name="Blumer H."/>
            <person name="Branscomb E."/>
            <person name="Brown N.C."/>
            <person name="Bruno W.J."/>
            <person name="Buckingham J.M."/>
            <person name="Callen D.F."/>
            <person name="Campbell C.S."/>
            <person name="Campbell M.L."/>
            <person name="Campbell E.W."/>
            <person name="Caoile C."/>
            <person name="Challacombe J.F."/>
            <person name="Chasteen L.A."/>
            <person name="Chertkov O."/>
            <person name="Chi H.C."/>
            <person name="Christensen M."/>
            <person name="Clark L.M."/>
            <person name="Cohn J.D."/>
            <person name="Denys M."/>
            <person name="Detter J.C."/>
            <person name="Dickson M."/>
            <person name="Dimitrijevic-Bussod M."/>
            <person name="Escobar J."/>
            <person name="Fawcett J.J."/>
            <person name="Flowers D."/>
            <person name="Fotopulos D."/>
            <person name="Glavina T."/>
            <person name="Gomez M."/>
            <person name="Gonzales E."/>
            <person name="Goodstein D."/>
            <person name="Goodwin L.A."/>
            <person name="Grady D.L."/>
            <person name="Grigoriev I."/>
            <person name="Groza M."/>
            <person name="Hammon N."/>
            <person name="Hawkins T."/>
            <person name="Haydu L."/>
            <person name="Hildebrand C.E."/>
            <person name="Huang W."/>
            <person name="Israni S."/>
            <person name="Jett J."/>
            <person name="Jewett P.B."/>
            <person name="Kadner K."/>
            <person name="Kimball H."/>
            <person name="Kobayashi A."/>
            <person name="Krawczyk M.-C."/>
            <person name="Leyba T."/>
            <person name="Longmire J.L."/>
            <person name="Lopez F."/>
            <person name="Lou Y."/>
            <person name="Lowry S."/>
            <person name="Ludeman T."/>
            <person name="Manohar C.F."/>
            <person name="Mark G.A."/>
            <person name="McMurray K.L."/>
            <person name="Meincke L.J."/>
            <person name="Morgan J."/>
            <person name="Moyzis R.K."/>
            <person name="Mundt M.O."/>
            <person name="Munk A.C."/>
            <person name="Nandkeshwar R.D."/>
            <person name="Pitluck S."/>
            <person name="Pollard M."/>
            <person name="Predki P."/>
            <person name="Parson-Quintana B."/>
            <person name="Ramirez L."/>
            <person name="Rash S."/>
            <person name="Retterer J."/>
            <person name="Ricke D.O."/>
            <person name="Robinson D.L."/>
            <person name="Rodriguez A."/>
            <person name="Salamov A."/>
            <person name="Saunders E.H."/>
            <person name="Scott D."/>
            <person name="Shough T."/>
            <person name="Stallings R.L."/>
            <person name="Stalvey M."/>
            <person name="Sutherland R.D."/>
            <person name="Tapia R."/>
            <person name="Tesmer J.G."/>
            <person name="Thayer N."/>
            <person name="Thompson L.S."/>
            <person name="Tice H."/>
            <person name="Torney D.C."/>
            <person name="Tran-Gyamfi M."/>
            <person name="Tsai M."/>
            <person name="Ulanovsky L.E."/>
            <person name="Ustaszewska A."/>
            <person name="Vo N."/>
            <person name="White P.S."/>
            <person name="Williams A.L."/>
            <person name="Wills P.L."/>
            <person name="Wu J.-R."/>
            <person name="Wu K."/>
            <person name="Yang J."/>
            <person name="DeJong P."/>
            <person name="Bruce D."/>
            <person name="Doggett N.A."/>
            <person name="Deaven L."/>
            <person name="Schmutz J."/>
            <person name="Grimwood J."/>
            <person name="Richardson P."/>
            <person name="Rokhsar D.S."/>
            <person name="Eichler E.E."/>
            <person name="Gilna P."/>
            <person name="Lucas S.M."/>
            <person name="Myers R.M."/>
            <person name="Rubin E.M."/>
            <person name="Pennacchio L.A."/>
        </authorList>
    </citation>
    <scope>NUCLEOTIDE SEQUENCE [LARGE SCALE GENOMIC DNA]</scope>
</reference>
<reference key="2">
    <citation type="journal article" date="2004" name="Genome Res.">
        <title>The status, quality, and expansion of the NIH full-length cDNA project: the Mammalian Gene Collection (MGC).</title>
        <authorList>
            <consortium name="The MGC Project Team"/>
        </authorList>
    </citation>
    <scope>NUCLEOTIDE SEQUENCE [LARGE SCALE MRNA]</scope>
    <source>
        <tissue>Lymphoma</tissue>
    </source>
</reference>